<evidence type="ECO:0000250" key="1"/>
<evidence type="ECO:0000255" key="2">
    <source>
        <dbReference type="PROSITE-ProRule" id="PRU01150"/>
    </source>
</evidence>
<evidence type="ECO:0000256" key="3">
    <source>
        <dbReference type="SAM" id="MobiDB-lite"/>
    </source>
</evidence>
<evidence type="ECO:0000305" key="4"/>
<sequence>MQFAHNSSIQKPTPPDKGSFPLDHDSECSKPMLAYVNCLSENNGLSRFCMEFSKEYLKCRMDNNLMAKEDMDNFGFEEVKKAKIVPAPHYNPNEPIVAGLSRRKRD</sequence>
<reference key="1">
    <citation type="journal article" date="2005" name="Nature">
        <title>The genome of the social amoeba Dictyostelium discoideum.</title>
        <authorList>
            <person name="Eichinger L."/>
            <person name="Pachebat J.A."/>
            <person name="Gloeckner G."/>
            <person name="Rajandream M.A."/>
            <person name="Sucgang R."/>
            <person name="Berriman M."/>
            <person name="Song J."/>
            <person name="Olsen R."/>
            <person name="Szafranski K."/>
            <person name="Xu Q."/>
            <person name="Tunggal B."/>
            <person name="Kummerfeld S."/>
            <person name="Madera M."/>
            <person name="Konfortov B.A."/>
            <person name="Rivero F."/>
            <person name="Bankier A.T."/>
            <person name="Lehmann R."/>
            <person name="Hamlin N."/>
            <person name="Davies R."/>
            <person name="Gaudet P."/>
            <person name="Fey P."/>
            <person name="Pilcher K."/>
            <person name="Chen G."/>
            <person name="Saunders D."/>
            <person name="Sodergren E.J."/>
            <person name="Davis P."/>
            <person name="Kerhornou A."/>
            <person name="Nie X."/>
            <person name="Hall N."/>
            <person name="Anjard C."/>
            <person name="Hemphill L."/>
            <person name="Bason N."/>
            <person name="Farbrother P."/>
            <person name="Desany B."/>
            <person name="Just E."/>
            <person name="Morio T."/>
            <person name="Rost R."/>
            <person name="Churcher C.M."/>
            <person name="Cooper J."/>
            <person name="Haydock S."/>
            <person name="van Driessche N."/>
            <person name="Cronin A."/>
            <person name="Goodhead I."/>
            <person name="Muzny D.M."/>
            <person name="Mourier T."/>
            <person name="Pain A."/>
            <person name="Lu M."/>
            <person name="Harper D."/>
            <person name="Lindsay R."/>
            <person name="Hauser H."/>
            <person name="James K.D."/>
            <person name="Quiles M."/>
            <person name="Madan Babu M."/>
            <person name="Saito T."/>
            <person name="Buchrieser C."/>
            <person name="Wardroper A."/>
            <person name="Felder M."/>
            <person name="Thangavelu M."/>
            <person name="Johnson D."/>
            <person name="Knights A."/>
            <person name="Loulseged H."/>
            <person name="Mungall K.L."/>
            <person name="Oliver K."/>
            <person name="Price C."/>
            <person name="Quail M.A."/>
            <person name="Urushihara H."/>
            <person name="Hernandez J."/>
            <person name="Rabbinowitsch E."/>
            <person name="Steffen D."/>
            <person name="Sanders M."/>
            <person name="Ma J."/>
            <person name="Kohara Y."/>
            <person name="Sharp S."/>
            <person name="Simmonds M.N."/>
            <person name="Spiegler S."/>
            <person name="Tivey A."/>
            <person name="Sugano S."/>
            <person name="White B."/>
            <person name="Walker D."/>
            <person name="Woodward J.R."/>
            <person name="Winckler T."/>
            <person name="Tanaka Y."/>
            <person name="Shaulsky G."/>
            <person name="Schleicher M."/>
            <person name="Weinstock G.M."/>
            <person name="Rosenthal A."/>
            <person name="Cox E.C."/>
            <person name="Chisholm R.L."/>
            <person name="Gibbs R.A."/>
            <person name="Loomis W.F."/>
            <person name="Platzer M."/>
            <person name="Kay R.R."/>
            <person name="Williams J.G."/>
            <person name="Dear P.H."/>
            <person name="Noegel A.A."/>
            <person name="Barrell B.G."/>
            <person name="Kuspa A."/>
        </authorList>
    </citation>
    <scope>NUCLEOTIDE SEQUENCE [LARGE SCALE GENOMIC DNA]</scope>
    <source>
        <strain>AX4</strain>
    </source>
</reference>
<feature type="chain" id="PRO_0000328616" description="Cytochrome c oxidase assembly protein COX19">
    <location>
        <begin position="1"/>
        <end position="106"/>
    </location>
</feature>
<feature type="domain" description="CHCH" evidence="2">
    <location>
        <begin position="25"/>
        <end position="67"/>
    </location>
</feature>
<feature type="region of interest" description="Disordered" evidence="3">
    <location>
        <begin position="1"/>
        <end position="24"/>
    </location>
</feature>
<feature type="short sequence motif" description="Cx9C motif 1" evidence="2">
    <location>
        <begin position="28"/>
        <end position="38"/>
    </location>
</feature>
<feature type="short sequence motif" description="Cx9C motif 2" evidence="2">
    <location>
        <begin position="49"/>
        <end position="59"/>
    </location>
</feature>
<feature type="compositionally biased region" description="Polar residues" evidence="3">
    <location>
        <begin position="1"/>
        <end position="11"/>
    </location>
</feature>
<feature type="disulfide bond" evidence="2">
    <location>
        <begin position="28"/>
        <end position="59"/>
    </location>
</feature>
<feature type="disulfide bond" evidence="2">
    <location>
        <begin position="38"/>
        <end position="49"/>
    </location>
</feature>
<accession>Q54IA0</accession>
<keyword id="KW-0963">Cytoplasm</keyword>
<keyword id="KW-1015">Disulfide bond</keyword>
<keyword id="KW-1185">Reference proteome</keyword>
<gene>
    <name type="primary">cox19</name>
    <name type="ORF">DDB_G0288903</name>
</gene>
<organism>
    <name type="scientific">Dictyostelium discoideum</name>
    <name type="common">Social amoeba</name>
    <dbReference type="NCBI Taxonomy" id="44689"/>
    <lineage>
        <taxon>Eukaryota</taxon>
        <taxon>Amoebozoa</taxon>
        <taxon>Evosea</taxon>
        <taxon>Eumycetozoa</taxon>
        <taxon>Dictyostelia</taxon>
        <taxon>Dictyosteliales</taxon>
        <taxon>Dictyosteliaceae</taxon>
        <taxon>Dictyostelium</taxon>
    </lineage>
</organism>
<proteinExistence type="inferred from homology"/>
<protein>
    <recommendedName>
        <fullName>Cytochrome c oxidase assembly protein COX19</fullName>
    </recommendedName>
</protein>
<name>COX19_DICDI</name>
<comment type="function">
    <text evidence="1">May be required for the assembly of mitochondrial cytochrome c oxidase.</text>
</comment>
<comment type="subcellular location">
    <subcellularLocation>
        <location evidence="1">Cytoplasm</location>
        <location evidence="1">Cytosol</location>
    </subcellularLocation>
</comment>
<comment type="similarity">
    <text evidence="4">Belongs to the COX19 family.</text>
</comment>
<dbReference type="EMBL" id="AAFI02000126">
    <property type="protein sequence ID" value="EAL62975.1"/>
    <property type="molecule type" value="Genomic_DNA"/>
</dbReference>
<dbReference type="RefSeq" id="XP_636479.1">
    <property type="nucleotide sequence ID" value="XM_631387.1"/>
</dbReference>
<dbReference type="SMR" id="Q54IA0"/>
<dbReference type="FunCoup" id="Q54IA0">
    <property type="interactions" value="75"/>
</dbReference>
<dbReference type="STRING" id="44689.Q54IA0"/>
<dbReference type="PaxDb" id="44689-DDB0305164"/>
<dbReference type="EnsemblProtists" id="EAL62975">
    <property type="protein sequence ID" value="EAL62975"/>
    <property type="gene ID" value="DDB_G0288903"/>
</dbReference>
<dbReference type="GeneID" id="8626862"/>
<dbReference type="KEGG" id="ddi:DDB_G0288903"/>
<dbReference type="dictyBase" id="DDB_G0288903">
    <property type="gene designation" value="cox19"/>
</dbReference>
<dbReference type="VEuPathDB" id="AmoebaDB:DDB_G0288903"/>
<dbReference type="eggNOG" id="KOG3477">
    <property type="taxonomic scope" value="Eukaryota"/>
</dbReference>
<dbReference type="HOGENOM" id="CLU_141947_0_0_1"/>
<dbReference type="InParanoid" id="Q54IA0"/>
<dbReference type="OMA" id="GTNDEAC"/>
<dbReference type="PhylomeDB" id="Q54IA0"/>
<dbReference type="PRO" id="PR:Q54IA0"/>
<dbReference type="Proteomes" id="UP000002195">
    <property type="component" value="Chromosome 5"/>
</dbReference>
<dbReference type="GO" id="GO:0005829">
    <property type="term" value="C:cytosol"/>
    <property type="evidence" value="ECO:0007669"/>
    <property type="project" value="UniProtKB-SubCell"/>
</dbReference>
<dbReference type="GO" id="GO:0005758">
    <property type="term" value="C:mitochondrial intermembrane space"/>
    <property type="evidence" value="ECO:0000318"/>
    <property type="project" value="GO_Central"/>
</dbReference>
<dbReference type="GO" id="GO:0033617">
    <property type="term" value="P:mitochondrial cytochrome c oxidase assembly"/>
    <property type="evidence" value="ECO:0000318"/>
    <property type="project" value="GO_Central"/>
</dbReference>
<dbReference type="InterPro" id="IPR051383">
    <property type="entry name" value="COX19"/>
</dbReference>
<dbReference type="InterPro" id="IPR009069">
    <property type="entry name" value="Cys_alpha_HP_mot_SF"/>
</dbReference>
<dbReference type="PANTHER" id="PTHR21107">
    <property type="entry name" value="CYTOCHROME C OXIDASE ASSEMBLY PROTEIN COX19"/>
    <property type="match status" value="1"/>
</dbReference>
<dbReference type="PANTHER" id="PTHR21107:SF2">
    <property type="entry name" value="CYTOCHROME C OXIDASE ASSEMBLY PROTEIN COX19"/>
    <property type="match status" value="1"/>
</dbReference>
<dbReference type="SUPFAM" id="SSF47072">
    <property type="entry name" value="Cysteine alpha-hairpin motif"/>
    <property type="match status" value="1"/>
</dbReference>
<dbReference type="PROSITE" id="PS51808">
    <property type="entry name" value="CHCH"/>
    <property type="match status" value="1"/>
</dbReference>